<evidence type="ECO:0000255" key="1">
    <source>
        <dbReference type="HAMAP-Rule" id="MF_00611"/>
    </source>
</evidence>
<sequence>MSIRIVPKEQLGKEPSEKSISFIPPVLFPNLKNLYQRRAERFQALAKDNPFADYLEFAAEIALAQEKALHDNPLELDLTPLLSQQTGIAPLDKKTFKRSKHWHALLASIIAELQSVVPESAKIALENLSKASETELEEMATALLNDEYSKVSADKSVFIWAALSLYWAQLAANIPGKAKTEYGENRQFCPVCNSMPVSSMVQIGTTQGLRYLHCNLCETEWHVVRIKCTNCELTGKLNYWSLDSENAPVKAESCGDCGSYLKILYQEKDANVDAVADDLASLILDAKMEEEGFARSSINPLLFPNE</sequence>
<keyword id="KW-0963">Cytoplasm</keyword>
<keyword id="KW-1185">Reference proteome</keyword>
<accession>B4F0S1</accession>
<gene>
    <name evidence="1" type="primary">fdhE</name>
    <name type="ordered locus">PMI3107</name>
</gene>
<comment type="function">
    <text evidence="1">Necessary for formate dehydrogenase activity.</text>
</comment>
<comment type="subcellular location">
    <subcellularLocation>
        <location evidence="1">Cytoplasm</location>
    </subcellularLocation>
</comment>
<comment type="similarity">
    <text evidence="1">Belongs to the FdhE family.</text>
</comment>
<organism>
    <name type="scientific">Proteus mirabilis (strain HI4320)</name>
    <dbReference type="NCBI Taxonomy" id="529507"/>
    <lineage>
        <taxon>Bacteria</taxon>
        <taxon>Pseudomonadati</taxon>
        <taxon>Pseudomonadota</taxon>
        <taxon>Gammaproteobacteria</taxon>
        <taxon>Enterobacterales</taxon>
        <taxon>Morganellaceae</taxon>
        <taxon>Proteus</taxon>
    </lineage>
</organism>
<protein>
    <recommendedName>
        <fullName evidence="1">Protein FdhE homolog</fullName>
    </recommendedName>
</protein>
<proteinExistence type="inferred from homology"/>
<reference key="1">
    <citation type="journal article" date="2008" name="J. Bacteriol.">
        <title>Complete genome sequence of uropathogenic Proteus mirabilis, a master of both adherence and motility.</title>
        <authorList>
            <person name="Pearson M.M."/>
            <person name="Sebaihia M."/>
            <person name="Churcher C."/>
            <person name="Quail M.A."/>
            <person name="Seshasayee A.S."/>
            <person name="Luscombe N.M."/>
            <person name="Abdellah Z."/>
            <person name="Arrosmith C."/>
            <person name="Atkin B."/>
            <person name="Chillingworth T."/>
            <person name="Hauser H."/>
            <person name="Jagels K."/>
            <person name="Moule S."/>
            <person name="Mungall K."/>
            <person name="Norbertczak H."/>
            <person name="Rabbinowitsch E."/>
            <person name="Walker D."/>
            <person name="Whithead S."/>
            <person name="Thomson N.R."/>
            <person name="Rather P.N."/>
            <person name="Parkhill J."/>
            <person name="Mobley H.L.T."/>
        </authorList>
    </citation>
    <scope>NUCLEOTIDE SEQUENCE [LARGE SCALE GENOMIC DNA]</scope>
    <source>
        <strain>HI4320</strain>
    </source>
</reference>
<feature type="chain" id="PRO_1000130364" description="Protein FdhE homolog">
    <location>
        <begin position="1"/>
        <end position="306"/>
    </location>
</feature>
<dbReference type="EMBL" id="AM942759">
    <property type="protein sequence ID" value="CAR46107.1"/>
    <property type="molecule type" value="Genomic_DNA"/>
</dbReference>
<dbReference type="RefSeq" id="WP_004246539.1">
    <property type="nucleotide sequence ID" value="NC_010554.1"/>
</dbReference>
<dbReference type="SMR" id="B4F0S1"/>
<dbReference type="EnsemblBacteria" id="CAR46107">
    <property type="protein sequence ID" value="CAR46107"/>
    <property type="gene ID" value="PMI3107"/>
</dbReference>
<dbReference type="GeneID" id="6801072"/>
<dbReference type="KEGG" id="pmr:PMI3107"/>
<dbReference type="eggNOG" id="COG3058">
    <property type="taxonomic scope" value="Bacteria"/>
</dbReference>
<dbReference type="HOGENOM" id="CLU_055275_0_0_6"/>
<dbReference type="Proteomes" id="UP000008319">
    <property type="component" value="Chromosome"/>
</dbReference>
<dbReference type="GO" id="GO:0005829">
    <property type="term" value="C:cytosol"/>
    <property type="evidence" value="ECO:0007669"/>
    <property type="project" value="TreeGrafter"/>
</dbReference>
<dbReference type="GO" id="GO:0008199">
    <property type="term" value="F:ferric iron binding"/>
    <property type="evidence" value="ECO:0007669"/>
    <property type="project" value="TreeGrafter"/>
</dbReference>
<dbReference type="GO" id="GO:0051604">
    <property type="term" value="P:protein maturation"/>
    <property type="evidence" value="ECO:0007669"/>
    <property type="project" value="TreeGrafter"/>
</dbReference>
<dbReference type="CDD" id="cd16341">
    <property type="entry name" value="FdhE"/>
    <property type="match status" value="1"/>
</dbReference>
<dbReference type="FunFam" id="3.90.1670.10:FF:000001">
    <property type="entry name" value="Protein FdhE"/>
    <property type="match status" value="1"/>
</dbReference>
<dbReference type="Gene3D" id="3.90.1670.10">
    <property type="entry name" value="FdhE-like domain"/>
    <property type="match status" value="1"/>
</dbReference>
<dbReference type="HAMAP" id="MF_00611">
    <property type="entry name" value="FdeH"/>
    <property type="match status" value="1"/>
</dbReference>
<dbReference type="InterPro" id="IPR024064">
    <property type="entry name" value="FdhE-like_sf"/>
</dbReference>
<dbReference type="InterPro" id="IPR056796">
    <property type="entry name" value="FdhE_C"/>
</dbReference>
<dbReference type="InterPro" id="IPR056797">
    <property type="entry name" value="FdhE_central"/>
</dbReference>
<dbReference type="InterPro" id="IPR056774">
    <property type="entry name" value="FdhE_N"/>
</dbReference>
<dbReference type="InterPro" id="IPR006452">
    <property type="entry name" value="Formate_DH_accessory"/>
</dbReference>
<dbReference type="NCBIfam" id="TIGR01562">
    <property type="entry name" value="FdhE"/>
    <property type="match status" value="1"/>
</dbReference>
<dbReference type="NCBIfam" id="NF002925">
    <property type="entry name" value="PRK03564.1"/>
    <property type="match status" value="1"/>
</dbReference>
<dbReference type="PANTHER" id="PTHR37689">
    <property type="entry name" value="PROTEIN FDHE"/>
    <property type="match status" value="1"/>
</dbReference>
<dbReference type="PANTHER" id="PTHR37689:SF1">
    <property type="entry name" value="PROTEIN FDHE"/>
    <property type="match status" value="1"/>
</dbReference>
<dbReference type="Pfam" id="PF24860">
    <property type="entry name" value="FdhE_C"/>
    <property type="match status" value="1"/>
</dbReference>
<dbReference type="Pfam" id="PF24859">
    <property type="entry name" value="FdhE_central"/>
    <property type="match status" value="1"/>
</dbReference>
<dbReference type="Pfam" id="PF04216">
    <property type="entry name" value="FdhE_N"/>
    <property type="match status" value="1"/>
</dbReference>
<dbReference type="PIRSF" id="PIRSF018296">
    <property type="entry name" value="Format_dh_formtn"/>
    <property type="match status" value="1"/>
</dbReference>
<dbReference type="SUPFAM" id="SSF144020">
    <property type="entry name" value="FdhE-like"/>
    <property type="match status" value="1"/>
</dbReference>
<name>FDHE_PROMH</name>